<accession>Q86AY4</accession>
<accession>Q55A29</accession>
<feature type="chain" id="PRO_0000393755" description="TNF receptor-associated factor family protein DDB_G0272340">
    <location>
        <begin position="1"/>
        <end position="449"/>
    </location>
</feature>
<feature type="domain" description="MATH" evidence="3">
    <location>
        <begin position="311"/>
        <end position="437"/>
    </location>
</feature>
<feature type="zinc finger region" description="RING-type; degenerate">
    <location>
        <begin position="33"/>
        <end position="76"/>
    </location>
</feature>
<feature type="zinc finger region" description="TRAF-type 1" evidence="4">
    <location>
        <begin position="133"/>
        <end position="187"/>
    </location>
</feature>
<feature type="zinc finger region" description="TRAF-type 2" evidence="4">
    <location>
        <begin position="189"/>
        <end position="251"/>
    </location>
</feature>
<feature type="coiled-coil region" evidence="2">
    <location>
        <begin position="263"/>
        <end position="309"/>
    </location>
</feature>
<dbReference type="EMBL" id="AAFI02000008">
    <property type="protein sequence ID" value="EAL71322.1"/>
    <property type="molecule type" value="Genomic_DNA"/>
</dbReference>
<dbReference type="RefSeq" id="XP_645155.1">
    <property type="nucleotide sequence ID" value="XM_640063.1"/>
</dbReference>
<dbReference type="SMR" id="Q86AY4"/>
<dbReference type="FunCoup" id="Q86AY4">
    <property type="interactions" value="11"/>
</dbReference>
<dbReference type="STRING" id="44689.Q86AY4"/>
<dbReference type="PaxDb" id="44689-DDB0206573"/>
<dbReference type="EnsemblProtists" id="EAL71322">
    <property type="protein sequence ID" value="EAL71322"/>
    <property type="gene ID" value="DDB_G0272340"/>
</dbReference>
<dbReference type="GeneID" id="8618326"/>
<dbReference type="KEGG" id="ddi:DDB_G0272340"/>
<dbReference type="dictyBase" id="DDB_G0272340">
    <property type="gene designation" value="trafG"/>
</dbReference>
<dbReference type="VEuPathDB" id="AmoebaDB:DDB_G0272340"/>
<dbReference type="eggNOG" id="KOG0297">
    <property type="taxonomic scope" value="Eukaryota"/>
</dbReference>
<dbReference type="HOGENOM" id="CLU_040980_0_0_1"/>
<dbReference type="InParanoid" id="Q86AY4"/>
<dbReference type="OMA" id="ICEECIM"/>
<dbReference type="PhylomeDB" id="Q86AY4"/>
<dbReference type="PRO" id="PR:Q86AY4"/>
<dbReference type="Proteomes" id="UP000002195">
    <property type="component" value="Chromosome 2"/>
</dbReference>
<dbReference type="GO" id="GO:0005737">
    <property type="term" value="C:cytoplasm"/>
    <property type="evidence" value="ECO:0000318"/>
    <property type="project" value="GO_Central"/>
</dbReference>
<dbReference type="GO" id="GO:0008270">
    <property type="term" value="F:zinc ion binding"/>
    <property type="evidence" value="ECO:0007669"/>
    <property type="project" value="UniProtKB-KW"/>
</dbReference>
<dbReference type="CDD" id="cd00121">
    <property type="entry name" value="MATH"/>
    <property type="match status" value="1"/>
</dbReference>
<dbReference type="Gene3D" id="2.60.210.10">
    <property type="entry name" value="Apoptosis, Tumor Necrosis Factor Receptor Associated Protein 2, Chain A"/>
    <property type="match status" value="1"/>
</dbReference>
<dbReference type="Gene3D" id="3.30.40.10">
    <property type="entry name" value="Zinc/RING finger domain, C3HC4 (zinc finger)"/>
    <property type="match status" value="3"/>
</dbReference>
<dbReference type="InterPro" id="IPR002083">
    <property type="entry name" value="MATH/TRAF_dom"/>
</dbReference>
<dbReference type="InterPro" id="IPR008974">
    <property type="entry name" value="TRAF-like"/>
</dbReference>
<dbReference type="InterPro" id="IPR013083">
    <property type="entry name" value="Znf_RING/FYVE/PHD"/>
</dbReference>
<dbReference type="InterPro" id="IPR001293">
    <property type="entry name" value="Znf_TRAF"/>
</dbReference>
<dbReference type="PANTHER" id="PTHR10131">
    <property type="entry name" value="TNF RECEPTOR ASSOCIATED FACTOR"/>
    <property type="match status" value="1"/>
</dbReference>
<dbReference type="PANTHER" id="PTHR10131:SF150">
    <property type="entry name" value="TNF RECEPTOR-ASSOCIATED FACTOR FAMILY PROTEIN DDB_G0272340"/>
    <property type="match status" value="1"/>
</dbReference>
<dbReference type="Pfam" id="PF22486">
    <property type="entry name" value="MATH_2"/>
    <property type="match status" value="1"/>
</dbReference>
<dbReference type="Pfam" id="PF02176">
    <property type="entry name" value="zf-TRAF"/>
    <property type="match status" value="2"/>
</dbReference>
<dbReference type="SMART" id="SM00061">
    <property type="entry name" value="MATH"/>
    <property type="match status" value="1"/>
</dbReference>
<dbReference type="SUPFAM" id="SSF57850">
    <property type="entry name" value="RING/U-box"/>
    <property type="match status" value="1"/>
</dbReference>
<dbReference type="SUPFAM" id="SSF49599">
    <property type="entry name" value="TRAF domain-like"/>
    <property type="match status" value="3"/>
</dbReference>
<dbReference type="PROSITE" id="PS50144">
    <property type="entry name" value="MATH"/>
    <property type="match status" value="1"/>
</dbReference>
<dbReference type="PROSITE" id="PS50145">
    <property type="entry name" value="ZF_TRAF"/>
    <property type="match status" value="2"/>
</dbReference>
<organism>
    <name type="scientific">Dictyostelium discoideum</name>
    <name type="common">Social amoeba</name>
    <dbReference type="NCBI Taxonomy" id="44689"/>
    <lineage>
        <taxon>Eukaryota</taxon>
        <taxon>Amoebozoa</taxon>
        <taxon>Evosea</taxon>
        <taxon>Eumycetozoa</taxon>
        <taxon>Dictyostelia</taxon>
        <taxon>Dictyosteliales</taxon>
        <taxon>Dictyosteliaceae</taxon>
        <taxon>Dictyostelium</taxon>
    </lineage>
</organism>
<evidence type="ECO:0000250" key="1"/>
<evidence type="ECO:0000255" key="2"/>
<evidence type="ECO:0000255" key="3">
    <source>
        <dbReference type="PROSITE-ProRule" id="PRU00129"/>
    </source>
</evidence>
<evidence type="ECO:0000255" key="4">
    <source>
        <dbReference type="PROSITE-ProRule" id="PRU00207"/>
    </source>
</evidence>
<evidence type="ECO:0000305" key="5"/>
<proteinExistence type="inferred from homology"/>
<reference key="1">
    <citation type="journal article" date="2002" name="Nature">
        <title>Sequence and analysis of chromosome 2 of Dictyostelium discoideum.</title>
        <authorList>
            <person name="Gloeckner G."/>
            <person name="Eichinger L."/>
            <person name="Szafranski K."/>
            <person name="Pachebat J.A."/>
            <person name="Bankier A.T."/>
            <person name="Dear P.H."/>
            <person name="Lehmann R."/>
            <person name="Baumgart C."/>
            <person name="Parra G."/>
            <person name="Abril J.F."/>
            <person name="Guigo R."/>
            <person name="Kumpf K."/>
            <person name="Tunggal B."/>
            <person name="Cox E.C."/>
            <person name="Quail M.A."/>
            <person name="Platzer M."/>
            <person name="Rosenthal A."/>
            <person name="Noegel A.A."/>
        </authorList>
    </citation>
    <scope>NUCLEOTIDE SEQUENCE [LARGE SCALE GENOMIC DNA]</scope>
    <source>
        <strain>AX4</strain>
    </source>
</reference>
<reference key="2">
    <citation type="journal article" date="2005" name="Nature">
        <title>The genome of the social amoeba Dictyostelium discoideum.</title>
        <authorList>
            <person name="Eichinger L."/>
            <person name="Pachebat J.A."/>
            <person name="Gloeckner G."/>
            <person name="Rajandream M.A."/>
            <person name="Sucgang R."/>
            <person name="Berriman M."/>
            <person name="Song J."/>
            <person name="Olsen R."/>
            <person name="Szafranski K."/>
            <person name="Xu Q."/>
            <person name="Tunggal B."/>
            <person name="Kummerfeld S."/>
            <person name="Madera M."/>
            <person name="Konfortov B.A."/>
            <person name="Rivero F."/>
            <person name="Bankier A.T."/>
            <person name="Lehmann R."/>
            <person name="Hamlin N."/>
            <person name="Davies R."/>
            <person name="Gaudet P."/>
            <person name="Fey P."/>
            <person name="Pilcher K."/>
            <person name="Chen G."/>
            <person name="Saunders D."/>
            <person name="Sodergren E.J."/>
            <person name="Davis P."/>
            <person name="Kerhornou A."/>
            <person name="Nie X."/>
            <person name="Hall N."/>
            <person name="Anjard C."/>
            <person name="Hemphill L."/>
            <person name="Bason N."/>
            <person name="Farbrother P."/>
            <person name="Desany B."/>
            <person name="Just E."/>
            <person name="Morio T."/>
            <person name="Rost R."/>
            <person name="Churcher C.M."/>
            <person name="Cooper J."/>
            <person name="Haydock S."/>
            <person name="van Driessche N."/>
            <person name="Cronin A."/>
            <person name="Goodhead I."/>
            <person name="Muzny D.M."/>
            <person name="Mourier T."/>
            <person name="Pain A."/>
            <person name="Lu M."/>
            <person name="Harper D."/>
            <person name="Lindsay R."/>
            <person name="Hauser H."/>
            <person name="James K.D."/>
            <person name="Quiles M."/>
            <person name="Madan Babu M."/>
            <person name="Saito T."/>
            <person name="Buchrieser C."/>
            <person name="Wardroper A."/>
            <person name="Felder M."/>
            <person name="Thangavelu M."/>
            <person name="Johnson D."/>
            <person name="Knights A."/>
            <person name="Loulseged H."/>
            <person name="Mungall K.L."/>
            <person name="Oliver K."/>
            <person name="Price C."/>
            <person name="Quail M.A."/>
            <person name="Urushihara H."/>
            <person name="Hernandez J."/>
            <person name="Rabbinowitsch E."/>
            <person name="Steffen D."/>
            <person name="Sanders M."/>
            <person name="Ma J."/>
            <person name="Kohara Y."/>
            <person name="Sharp S."/>
            <person name="Simmonds M.N."/>
            <person name="Spiegler S."/>
            <person name="Tivey A."/>
            <person name="Sugano S."/>
            <person name="White B."/>
            <person name="Walker D."/>
            <person name="Woodward J.R."/>
            <person name="Winckler T."/>
            <person name="Tanaka Y."/>
            <person name="Shaulsky G."/>
            <person name="Schleicher M."/>
            <person name="Weinstock G.M."/>
            <person name="Rosenthal A."/>
            <person name="Cox E.C."/>
            <person name="Chisholm R.L."/>
            <person name="Gibbs R.A."/>
            <person name="Loomis W.F."/>
            <person name="Platzer M."/>
            <person name="Kay R.R."/>
            <person name="Williams J.G."/>
            <person name="Dear P.H."/>
            <person name="Noegel A.A."/>
            <person name="Barrell B.G."/>
            <person name="Kuspa A."/>
        </authorList>
    </citation>
    <scope>NUCLEOTIDE SEQUENCE [LARGE SCALE GENOMIC DNA]</scope>
    <source>
        <strain>AX4</strain>
    </source>
</reference>
<gene>
    <name type="ORF">DDB_G0272340</name>
</gene>
<name>Y2340_DICDI</name>
<sequence>MTTTISQLNITPIKFTINDLIVDPVSLSENFNCPICEECIMDVNKCEALQCKEGHVHCRLCWMKSLESKKECMTCRTRVNSVDSLSKNIYLQKEFRNKKIFCPNLFRILNSGKIEIDEKFGCKEILKVDELEGHIKECQFQFIECPNDKECKTRLRKNQLKDHAEKCKKLKSECEFCGEKGLVIDDSKVHYSECEKFPIKCPQNCNSPTFNCTIERGRIKYHIENECPFTVIQCKYREAGCMLEFPRSELSEHMKLIDHSKYMEATIDQHICKFEKSEKEYKKLELEYNRLKDDFKILQSELKVIRELKFNYQNKWVITNWSQKLQDYPKPKSIESPEFMVGNLKFKIQFYPNGGLSDESKDFLSIYLYKFDDQTPSKVQFSFELLNKDFTRNRKLASTNIFHTENKWGWRSFINNSLVTTQTGFVIQNSVTLNINIEILPEEKEAFTS</sequence>
<keyword id="KW-0175">Coiled coil</keyword>
<keyword id="KW-0963">Cytoplasm</keyword>
<keyword id="KW-0479">Metal-binding</keyword>
<keyword id="KW-1185">Reference proteome</keyword>
<keyword id="KW-0677">Repeat</keyword>
<keyword id="KW-0862">Zinc</keyword>
<keyword id="KW-0863">Zinc-finger</keyword>
<comment type="function">
    <text evidence="1">Probable adapter protein and signal transducer that links members of the tumor necrosis factor receptor family to different signaling pathways by association with the receptor cytoplasmic domain and kinases.</text>
</comment>
<comment type="subcellular location">
    <subcellularLocation>
        <location evidence="1">Cytoplasm</location>
    </subcellularLocation>
</comment>
<comment type="domain">
    <text>The MATH/TRAF domain binds to receptor cytoplasmic domains.</text>
</comment>
<comment type="similarity">
    <text evidence="5">Belongs to the TNF receptor-associated factor family. A subfamily.</text>
</comment>
<protein>
    <recommendedName>
        <fullName>TNF receptor-associated factor family protein DDB_G0272340</fullName>
    </recommendedName>
</protein>